<name>SELP_SV40</name>
<sequence length="23" mass="2705">MQRPRPPRPLSYSRSSEEAFLEA</sequence>
<dbReference type="EMBL" id="J02400">
    <property type="protein sequence ID" value="AAB59919.1"/>
    <property type="molecule type" value="Genomic_DNA"/>
</dbReference>
<dbReference type="EMBL" id="AJ276576">
    <property type="protein sequence ID" value="CAB82890.1"/>
    <property type="molecule type" value="Genomic_DNA"/>
</dbReference>
<dbReference type="EMBL" id="AJ430321">
    <property type="protein sequence ID" value="CAD23041.1"/>
    <property type="molecule type" value="Genomic_DNA"/>
</dbReference>
<dbReference type="EMBL" id="AJ430322">
    <property type="protein sequence ID" value="CAD23042.1"/>
    <property type="molecule type" value="Genomic_DNA"/>
</dbReference>
<dbReference type="EMBL" id="AJ430323">
    <property type="protein sequence ID" value="CAD23043.1"/>
    <property type="molecule type" value="Genomic_DNA"/>
</dbReference>
<dbReference type="RefSeq" id="NP_043122.1">
    <molecule id="P0C6L2-1"/>
    <property type="nucleotide sequence ID" value="NC_001669.1"/>
</dbReference>
<dbReference type="RefSeq" id="YP_003708377.1">
    <property type="nucleotide sequence ID" value="NC_001669.1"/>
</dbReference>
<dbReference type="GeneID" id="29031022"/>
<dbReference type="Proteomes" id="UP000007705">
    <property type="component" value="Genome"/>
</dbReference>
<feature type="chain" id="PRO_0000355200" description="SV40 early leader protein">
    <location>
        <begin position="1"/>
        <end position="23"/>
    </location>
</feature>
<feature type="region of interest" description="Disordered" evidence="1">
    <location>
        <begin position="1"/>
        <end position="23"/>
    </location>
</feature>
<organismHost>
    <name type="scientific">Macaca</name>
    <name type="common">macaques</name>
    <dbReference type="NCBI Taxonomy" id="9539"/>
</organismHost>
<organism>
    <name type="scientific">Simian virus 40</name>
    <name type="common">SV40</name>
    <dbReference type="NCBI Taxonomy" id="1891767"/>
    <lineage>
        <taxon>Viruses</taxon>
        <taxon>Monodnaviria</taxon>
        <taxon>Shotokuvirae</taxon>
        <taxon>Cossaviricota</taxon>
        <taxon>Papovaviricetes</taxon>
        <taxon>Sepolyvirales</taxon>
        <taxon>Polyomaviridae</taxon>
        <taxon>Betapolyomavirus</taxon>
    </lineage>
</organism>
<protein>
    <recommendedName>
        <fullName>SV40 early leader protein</fullName>
        <shortName>SELP</shortName>
    </recommendedName>
</protein>
<reference key="1">
    <citation type="journal article" date="1978" name="Science">
        <title>The genome of simian virus 40.</title>
        <authorList>
            <person name="Reddy V.B."/>
            <person name="Thimmappaya B."/>
            <person name="Dhar R."/>
            <person name="Subramanian K.N."/>
            <person name="Zain B.S."/>
            <person name="Pan J."/>
            <person name="Ghosh P.K."/>
            <person name="Celma M.L."/>
            <person name="Weissman S.M."/>
        </authorList>
    </citation>
    <scope>NUCLEOTIDE SEQUENCE [GENOMIC DNA]</scope>
</reference>
<reference key="2">
    <citation type="journal article" date="1978" name="Nature">
        <title>Complete nucleotide sequence of SV40 DNA.</title>
        <authorList>
            <person name="Fiers W."/>
            <person name="Contreras R."/>
            <person name="Haegeman G."/>
            <person name="Rogiers R."/>
            <person name="van de Voorde A."/>
            <person name="van Heuverswyn H."/>
            <person name="van Herreweghe J."/>
            <person name="Volckaert G."/>
            <person name="Ysebaert M."/>
        </authorList>
    </citation>
    <scope>NUCLEOTIDE SEQUENCE [GENOMIC DNA]</scope>
    <source>
        <strain>776</strain>
    </source>
</reference>
<reference key="3">
    <citation type="journal article" date="1978" name="Cell">
        <title>The binding site on SV40 DNA for a T antigen-related protein.</title>
        <authorList>
            <person name="Tjian R."/>
        </authorList>
    </citation>
    <scope>NUCLEOTIDE SEQUENCE [GENOMIC DNA]</scope>
</reference>
<reference key="4">
    <citation type="journal article" date="1979" name="Curr. Top. Microbiol. Immunol.">
        <title>Organization and transcription of the simian virus 40 genome.</title>
        <authorList>
            <person name="Lebowitz P."/>
            <person name="Weissman S.M."/>
        </authorList>
    </citation>
    <scope>NUCLEOTIDE SEQUENCE [GENOMIC DNA]</scope>
</reference>
<reference key="5">
    <citation type="journal article" date="1980" name="Proc. Natl. Acad. Sci. U.S.A.">
        <title>Expression of early genes of origin-defective mutants of simian virus 40.</title>
        <authorList>
            <person name="Gluzman Y."/>
            <person name="Sambrook J.F."/>
            <person name="Frisque R.J."/>
        </authorList>
    </citation>
    <scope>NUCLEOTIDE SEQUENCE [GENOMIC DNA]</scope>
</reference>
<reference key="6">
    <citation type="journal article" date="1981" name="Nature">
        <title>Binding of an SV40 T antigen-related protein to the DNA of SV40 regulatory mutants.</title>
        <authorList>
            <person name="McKay R."/>
            <person name="DiMaio D."/>
        </authorList>
    </citation>
    <scope>NUCLEOTIDE SEQUENCE [GENOMIC DNA]</scope>
</reference>
<reference key="7">
    <citation type="journal article" date="1981" name="Cell">
        <title>SV40 gene expression is modulated by the cooperative binding of T antigen to DNA.</title>
        <authorList>
            <person name="Myers R.M."/>
            <person name="Rio D.C."/>
            <person name="Robbins A.K."/>
            <person name="Tjian R."/>
        </authorList>
    </citation>
    <scope>NUCLEOTIDE SEQUENCE [GENOMIC DNA]</scope>
</reference>
<reference key="8">
    <citation type="submission" date="2000-03" db="EMBL/GenBank/DDBJ databases">
        <authorList>
            <person name="Hubner R.K.P."/>
        </authorList>
    </citation>
    <scope>NUCLEOTIDE SEQUENCE [GENOMIC DNA]</scope>
    <source>
        <strain>4A</strain>
    </source>
</reference>
<reference key="9">
    <citation type="submission" date="2002-01" db="EMBL/GenBank/DDBJ databases">
        <authorList>
            <person name="Hubner R."/>
            <person name="Van Marck E."/>
        </authorList>
    </citation>
    <scope>NUCLEOTIDE SEQUENCE [GENOMIC DNA]</scope>
    <source>
        <strain>PML-1a</strain>
        <strain>PML-1b</strain>
        <strain>PML-1c</strain>
    </source>
</reference>
<reference key="10">
    <citation type="journal article" date="1987" name="Cell">
        <title>Translational regulation of SV40 early mRNA defines a new viral protein.</title>
        <authorList>
            <person name="Khalili K."/>
            <person name="Brady J."/>
            <person name="Khoury G."/>
        </authorList>
    </citation>
    <scope>FUNCTION</scope>
</reference>
<comment type="function">
    <text evidence="2">May play a role in the lytic cycle.</text>
</comment>
<comment type="alternative products">
    <event type="alternative splicing"/>
    <event type="alternative initiation"/>
    <isoform>
        <id>P0C6L2-1</id>
        <name>SELP</name>
        <sequence type="displayed"/>
    </isoform>
    <isoform>
        <id>P03070-1</id>
        <name>Large T antigen</name>
        <sequence type="external"/>
    </isoform>
    <isoform>
        <id>P03081-1</id>
        <name>Small t antigen</name>
        <sequence type="external"/>
    </isoform>
    <isoform>
        <id>P03070-2</id>
        <name>17kT antigen</name>
        <sequence type="external"/>
    </isoform>
</comment>
<comment type="miscellaneous">
    <molecule>Isoform SELP</molecule>
    <text>Produced by alternative initiation.</text>
</comment>
<comment type="similarity">
    <text evidence="3">Belongs to the polyomavirus early leader protein family.</text>
</comment>
<proteinExistence type="inferred from homology"/>
<evidence type="ECO:0000256" key="1">
    <source>
        <dbReference type="SAM" id="MobiDB-lite"/>
    </source>
</evidence>
<evidence type="ECO:0000269" key="2">
    <source>
    </source>
</evidence>
<evidence type="ECO:0000305" key="3"/>
<accession>P0C6L2</accession>
<accession>Q04240</accession>
<accession>Q9IVA6</accession>
<keyword id="KW-0024">Alternative initiation</keyword>
<keyword id="KW-0025">Alternative splicing</keyword>
<keyword id="KW-1185">Reference proteome</keyword>